<feature type="chain" id="PRO_0000144432" description="ATP synthase subunit beta">
    <location>
        <begin position="1"/>
        <end position="462"/>
    </location>
</feature>
<feature type="binding site" evidence="1">
    <location>
        <begin position="151"/>
        <end position="158"/>
    </location>
    <ligand>
        <name>ATP</name>
        <dbReference type="ChEBI" id="CHEBI:30616"/>
    </ligand>
</feature>
<accession>P42465</accession>
<accession>B3QRG2</accession>
<sequence length="462" mass="50149">MQEGKISQIIGPVVDVDFPEGQLPSILDALTVTRQDGSKLVLETQQHLGEERVRTISMEGTDGLVRGMSVANTGRPIQAPVGAEVLGRMLNVVGEPIDGKGPVPSKKSYPIHRSAPKFDELSTKAEMFETGIKVIDLLEPYSRGGKTGLFGGAGVGKTVLIMELINNIAKEQSGYSVFAGVGERTREGNDLWHEMMESGVIDKTALVFGQMNEPPGARARVALTGLSIAEYFRDEEGRDVLLFIDNIFRFTQAGAEVSALLGRMPSAVGYQPTLGTEMGELQDRIVSTKKGSVTSVQAIYVPADDLTDPAPATAFTHLDATTVLSRQIAELGIYPAVDPLDSTSRILDPNIIGNDHYDTAQAVKQILQRYKDLQDIIAILGMDELSDEDKLVVARARKVQRFLSQPFFVAEAFTGLAGKYVKLEDTIKGFKEIIAGKHDSLPENAFYLVGTIEEAVEKAKKL</sequence>
<gene>
    <name evidence="1" type="primary">atpD</name>
    <name type="ordered locus">Cpar_0045</name>
</gene>
<keyword id="KW-0066">ATP synthesis</keyword>
<keyword id="KW-0067">ATP-binding</keyword>
<keyword id="KW-0997">Cell inner membrane</keyword>
<keyword id="KW-1003">Cell membrane</keyword>
<keyword id="KW-0139">CF(1)</keyword>
<keyword id="KW-0375">Hydrogen ion transport</keyword>
<keyword id="KW-0406">Ion transport</keyword>
<keyword id="KW-0472">Membrane</keyword>
<keyword id="KW-0547">Nucleotide-binding</keyword>
<keyword id="KW-1278">Translocase</keyword>
<keyword id="KW-0813">Transport</keyword>
<name>ATPB_CHLP8</name>
<comment type="function">
    <text evidence="1">Produces ATP from ADP in the presence of a proton gradient across the membrane. The catalytic sites are hosted primarily by the beta subunits.</text>
</comment>
<comment type="catalytic activity">
    <reaction evidence="1">
        <text>ATP + H2O + 4 H(+)(in) = ADP + phosphate + 5 H(+)(out)</text>
        <dbReference type="Rhea" id="RHEA:57720"/>
        <dbReference type="ChEBI" id="CHEBI:15377"/>
        <dbReference type="ChEBI" id="CHEBI:15378"/>
        <dbReference type="ChEBI" id="CHEBI:30616"/>
        <dbReference type="ChEBI" id="CHEBI:43474"/>
        <dbReference type="ChEBI" id="CHEBI:456216"/>
        <dbReference type="EC" id="7.1.2.2"/>
    </reaction>
</comment>
<comment type="subunit">
    <text evidence="1">F-type ATPases have 2 components, CF(1) - the catalytic core - and CF(0) - the membrane proton channel. CF(1) has five subunits: alpha(3), beta(3), gamma(1), delta(1), epsilon(1). CF(0) has three main subunits: a(1), b(2) and c(9-12). The alpha and beta chains form an alternating ring which encloses part of the gamma chain. CF(1) is attached to CF(0) by a central stalk formed by the gamma and epsilon chains, while a peripheral stalk is formed by the delta and b chains.</text>
</comment>
<comment type="subcellular location">
    <subcellularLocation>
        <location evidence="1">Cell inner membrane</location>
        <topology evidence="1">Peripheral membrane protein</topology>
    </subcellularLocation>
</comment>
<comment type="similarity">
    <text evidence="1">Belongs to the ATPase alpha/beta chains family.</text>
</comment>
<dbReference type="EC" id="7.1.2.2" evidence="1"/>
<dbReference type="EMBL" id="X76873">
    <property type="protein sequence ID" value="CAA54200.1"/>
    <property type="molecule type" value="Genomic_DNA"/>
</dbReference>
<dbReference type="EMBL" id="CP001099">
    <property type="protein sequence ID" value="ACF10473.1"/>
    <property type="molecule type" value="Genomic_DNA"/>
</dbReference>
<dbReference type="RefSeq" id="WP_012501308.1">
    <property type="nucleotide sequence ID" value="NC_011027.1"/>
</dbReference>
<dbReference type="SMR" id="P42465"/>
<dbReference type="STRING" id="517417.Cpar_0045"/>
<dbReference type="KEGG" id="cpc:Cpar_0045"/>
<dbReference type="eggNOG" id="COG0055">
    <property type="taxonomic scope" value="Bacteria"/>
</dbReference>
<dbReference type="HOGENOM" id="CLU_022398_0_2_10"/>
<dbReference type="OrthoDB" id="9801639at2"/>
<dbReference type="Proteomes" id="UP000008811">
    <property type="component" value="Chromosome"/>
</dbReference>
<dbReference type="GO" id="GO:0005886">
    <property type="term" value="C:plasma membrane"/>
    <property type="evidence" value="ECO:0007669"/>
    <property type="project" value="UniProtKB-SubCell"/>
</dbReference>
<dbReference type="GO" id="GO:0045259">
    <property type="term" value="C:proton-transporting ATP synthase complex"/>
    <property type="evidence" value="ECO:0007669"/>
    <property type="project" value="UniProtKB-KW"/>
</dbReference>
<dbReference type="GO" id="GO:0005524">
    <property type="term" value="F:ATP binding"/>
    <property type="evidence" value="ECO:0007669"/>
    <property type="project" value="UniProtKB-UniRule"/>
</dbReference>
<dbReference type="GO" id="GO:0016887">
    <property type="term" value="F:ATP hydrolysis activity"/>
    <property type="evidence" value="ECO:0007669"/>
    <property type="project" value="InterPro"/>
</dbReference>
<dbReference type="GO" id="GO:0046933">
    <property type="term" value="F:proton-transporting ATP synthase activity, rotational mechanism"/>
    <property type="evidence" value="ECO:0007669"/>
    <property type="project" value="UniProtKB-UniRule"/>
</dbReference>
<dbReference type="CDD" id="cd18110">
    <property type="entry name" value="ATP-synt_F1_beta_C"/>
    <property type="match status" value="1"/>
</dbReference>
<dbReference type="CDD" id="cd18115">
    <property type="entry name" value="ATP-synt_F1_beta_N"/>
    <property type="match status" value="1"/>
</dbReference>
<dbReference type="CDD" id="cd01133">
    <property type="entry name" value="F1-ATPase_beta_CD"/>
    <property type="match status" value="1"/>
</dbReference>
<dbReference type="FunFam" id="1.10.1140.10:FF:000001">
    <property type="entry name" value="ATP synthase subunit beta"/>
    <property type="match status" value="1"/>
</dbReference>
<dbReference type="FunFam" id="2.40.10.170:FF:000005">
    <property type="entry name" value="ATP synthase subunit beta"/>
    <property type="match status" value="1"/>
</dbReference>
<dbReference type="FunFam" id="3.40.50.300:FF:000026">
    <property type="entry name" value="ATP synthase subunit beta"/>
    <property type="match status" value="1"/>
</dbReference>
<dbReference type="Gene3D" id="2.40.10.170">
    <property type="match status" value="1"/>
</dbReference>
<dbReference type="Gene3D" id="1.10.1140.10">
    <property type="entry name" value="Bovine Mitochondrial F1-atpase, Atp Synthase Beta Chain, Chain D, domain 3"/>
    <property type="match status" value="1"/>
</dbReference>
<dbReference type="Gene3D" id="3.40.50.300">
    <property type="entry name" value="P-loop containing nucleotide triphosphate hydrolases"/>
    <property type="match status" value="1"/>
</dbReference>
<dbReference type="HAMAP" id="MF_01347">
    <property type="entry name" value="ATP_synth_beta_bact"/>
    <property type="match status" value="1"/>
</dbReference>
<dbReference type="InterPro" id="IPR003593">
    <property type="entry name" value="AAA+_ATPase"/>
</dbReference>
<dbReference type="InterPro" id="IPR055190">
    <property type="entry name" value="ATP-synt_VA_C"/>
</dbReference>
<dbReference type="InterPro" id="IPR005722">
    <property type="entry name" value="ATP_synth_F1_bsu"/>
</dbReference>
<dbReference type="InterPro" id="IPR020003">
    <property type="entry name" value="ATPase_a/bsu_AS"/>
</dbReference>
<dbReference type="InterPro" id="IPR050053">
    <property type="entry name" value="ATPase_alpha/beta_chains"/>
</dbReference>
<dbReference type="InterPro" id="IPR004100">
    <property type="entry name" value="ATPase_F1/V1/A1_a/bsu_N"/>
</dbReference>
<dbReference type="InterPro" id="IPR036121">
    <property type="entry name" value="ATPase_F1/V1/A1_a/bsu_N_sf"/>
</dbReference>
<dbReference type="InterPro" id="IPR000194">
    <property type="entry name" value="ATPase_F1/V1/A1_a/bsu_nucl-bd"/>
</dbReference>
<dbReference type="InterPro" id="IPR024034">
    <property type="entry name" value="ATPase_F1/V1_b/a_C"/>
</dbReference>
<dbReference type="InterPro" id="IPR027417">
    <property type="entry name" value="P-loop_NTPase"/>
</dbReference>
<dbReference type="NCBIfam" id="TIGR01039">
    <property type="entry name" value="atpD"/>
    <property type="match status" value="1"/>
</dbReference>
<dbReference type="PANTHER" id="PTHR15184">
    <property type="entry name" value="ATP SYNTHASE"/>
    <property type="match status" value="1"/>
</dbReference>
<dbReference type="PANTHER" id="PTHR15184:SF71">
    <property type="entry name" value="ATP SYNTHASE SUBUNIT BETA, MITOCHONDRIAL"/>
    <property type="match status" value="1"/>
</dbReference>
<dbReference type="Pfam" id="PF00006">
    <property type="entry name" value="ATP-synt_ab"/>
    <property type="match status" value="1"/>
</dbReference>
<dbReference type="Pfam" id="PF02874">
    <property type="entry name" value="ATP-synt_ab_N"/>
    <property type="match status" value="1"/>
</dbReference>
<dbReference type="Pfam" id="PF22919">
    <property type="entry name" value="ATP-synt_VA_C"/>
    <property type="match status" value="1"/>
</dbReference>
<dbReference type="PIRSF" id="PIRSF039072">
    <property type="entry name" value="ATPase_subunit_beta"/>
    <property type="match status" value="1"/>
</dbReference>
<dbReference type="SMART" id="SM00382">
    <property type="entry name" value="AAA"/>
    <property type="match status" value="1"/>
</dbReference>
<dbReference type="SUPFAM" id="SSF47917">
    <property type="entry name" value="C-terminal domain of alpha and beta subunits of F1 ATP synthase"/>
    <property type="match status" value="1"/>
</dbReference>
<dbReference type="SUPFAM" id="SSF50615">
    <property type="entry name" value="N-terminal domain of alpha and beta subunits of F1 ATP synthase"/>
    <property type="match status" value="1"/>
</dbReference>
<dbReference type="SUPFAM" id="SSF52540">
    <property type="entry name" value="P-loop containing nucleoside triphosphate hydrolases"/>
    <property type="match status" value="1"/>
</dbReference>
<dbReference type="PROSITE" id="PS00152">
    <property type="entry name" value="ATPASE_ALPHA_BETA"/>
    <property type="match status" value="1"/>
</dbReference>
<evidence type="ECO:0000255" key="1">
    <source>
        <dbReference type="HAMAP-Rule" id="MF_01347"/>
    </source>
</evidence>
<protein>
    <recommendedName>
        <fullName evidence="1">ATP synthase subunit beta</fullName>
        <ecNumber evidence="1">7.1.2.2</ecNumber>
    </recommendedName>
    <alternativeName>
        <fullName evidence="1">ATP synthase F1 sector subunit beta</fullName>
    </alternativeName>
    <alternativeName>
        <fullName evidence="1">F-ATPase subunit beta</fullName>
    </alternativeName>
</protein>
<organism>
    <name type="scientific">Chlorobaculum parvum (strain DSM 263 / NCIMB 8327)</name>
    <name type="common">Chlorobium vibrioforme subsp. thiosulfatophilum</name>
    <dbReference type="NCBI Taxonomy" id="517417"/>
    <lineage>
        <taxon>Bacteria</taxon>
        <taxon>Pseudomonadati</taxon>
        <taxon>Chlorobiota</taxon>
        <taxon>Chlorobiia</taxon>
        <taxon>Chlorobiales</taxon>
        <taxon>Chlorobiaceae</taxon>
        <taxon>Chlorobaculum</taxon>
    </lineage>
</organism>
<proteinExistence type="inferred from homology"/>
<reference key="1">
    <citation type="journal article" date="1993" name="Antonie Van Leeuwenhoek">
        <title>Phylogenetic relationships of Bacteria based on comparative sequence analysis of elongation factor Tu and ATP-synthase beta-subunit genes.</title>
        <authorList>
            <person name="Ludwig W."/>
            <person name="Neumaier J."/>
            <person name="Klugbauer N."/>
            <person name="Brockmann E."/>
            <person name="Roller C."/>
            <person name="Klugbauer S."/>
            <person name="Reetz K."/>
            <person name="Schachtner I."/>
            <person name="Ludvigsen A."/>
            <person name="Bachleitner M."/>
            <person name="Fischer U."/>
            <person name="Schleifer K.H."/>
        </authorList>
    </citation>
    <scope>NUCLEOTIDE SEQUENCE [GENOMIC DNA]</scope>
</reference>
<reference key="2">
    <citation type="submission" date="2008-06" db="EMBL/GenBank/DDBJ databases">
        <title>Complete sequence of Chlorobaculum parvum NCIB 8327.</title>
        <authorList>
            <consortium name="US DOE Joint Genome Institute"/>
            <person name="Lucas S."/>
            <person name="Copeland A."/>
            <person name="Lapidus A."/>
            <person name="Glavina del Rio T."/>
            <person name="Dalin E."/>
            <person name="Tice H."/>
            <person name="Bruce D."/>
            <person name="Goodwin L."/>
            <person name="Pitluck S."/>
            <person name="Schmutz J."/>
            <person name="Larimer F."/>
            <person name="Land M."/>
            <person name="Hauser L."/>
            <person name="Kyrpides N."/>
            <person name="Mikhailova N."/>
            <person name="Zhao F."/>
            <person name="Li T."/>
            <person name="Liu Z."/>
            <person name="Overmann J."/>
            <person name="Bryant D.A."/>
            <person name="Richardson P."/>
        </authorList>
    </citation>
    <scope>NUCLEOTIDE SEQUENCE [LARGE SCALE GENOMIC DNA]</scope>
    <source>
        <strain>DSM 263 / NCIMB 8327</strain>
    </source>
</reference>